<accession>B4TGH3</accession>
<keyword id="KW-0687">Ribonucleoprotein</keyword>
<keyword id="KW-0689">Ribosomal protein</keyword>
<reference key="1">
    <citation type="journal article" date="2011" name="J. Bacteriol.">
        <title>Comparative genomics of 28 Salmonella enterica isolates: evidence for CRISPR-mediated adaptive sublineage evolution.</title>
        <authorList>
            <person name="Fricke W.F."/>
            <person name="Mammel M.K."/>
            <person name="McDermott P.F."/>
            <person name="Tartera C."/>
            <person name="White D.G."/>
            <person name="Leclerc J.E."/>
            <person name="Ravel J."/>
            <person name="Cebula T.A."/>
        </authorList>
    </citation>
    <scope>NUCLEOTIDE SEQUENCE [LARGE SCALE GENOMIC DNA]</scope>
    <source>
        <strain>SL476</strain>
    </source>
</reference>
<comment type="similarity">
    <text evidence="1">Belongs to the bacterial ribosomal protein bL35 family.</text>
</comment>
<name>RL35_SALHS</name>
<evidence type="ECO:0000255" key="1">
    <source>
        <dbReference type="HAMAP-Rule" id="MF_00514"/>
    </source>
</evidence>
<evidence type="ECO:0000256" key="2">
    <source>
        <dbReference type="SAM" id="MobiDB-lite"/>
    </source>
</evidence>
<evidence type="ECO:0000305" key="3"/>
<sequence>MPKIKTVRGAAKRFKKTGKGGFKHKHANLRHILTKKATKRKRHLRPKAMVSKGDLGLVIACLPYA</sequence>
<organism>
    <name type="scientific">Salmonella heidelberg (strain SL476)</name>
    <dbReference type="NCBI Taxonomy" id="454169"/>
    <lineage>
        <taxon>Bacteria</taxon>
        <taxon>Pseudomonadati</taxon>
        <taxon>Pseudomonadota</taxon>
        <taxon>Gammaproteobacteria</taxon>
        <taxon>Enterobacterales</taxon>
        <taxon>Enterobacteriaceae</taxon>
        <taxon>Salmonella</taxon>
    </lineage>
</organism>
<dbReference type="EMBL" id="CP001120">
    <property type="protein sequence ID" value="ACF70064.1"/>
    <property type="molecule type" value="Genomic_DNA"/>
</dbReference>
<dbReference type="RefSeq" id="WP_001124225.1">
    <property type="nucleotide sequence ID" value="NC_011083.1"/>
</dbReference>
<dbReference type="SMR" id="B4TGH3"/>
<dbReference type="GeneID" id="97601348"/>
<dbReference type="KEGG" id="seh:SeHA_C1463"/>
<dbReference type="HOGENOM" id="CLU_169643_1_1_6"/>
<dbReference type="Proteomes" id="UP000001866">
    <property type="component" value="Chromosome"/>
</dbReference>
<dbReference type="GO" id="GO:0022625">
    <property type="term" value="C:cytosolic large ribosomal subunit"/>
    <property type="evidence" value="ECO:0007669"/>
    <property type="project" value="TreeGrafter"/>
</dbReference>
<dbReference type="GO" id="GO:0003735">
    <property type="term" value="F:structural constituent of ribosome"/>
    <property type="evidence" value="ECO:0007669"/>
    <property type="project" value="InterPro"/>
</dbReference>
<dbReference type="GO" id="GO:0006412">
    <property type="term" value="P:translation"/>
    <property type="evidence" value="ECO:0007669"/>
    <property type="project" value="UniProtKB-UniRule"/>
</dbReference>
<dbReference type="FunFam" id="4.10.410.60:FF:000001">
    <property type="entry name" value="50S ribosomal protein L35"/>
    <property type="match status" value="1"/>
</dbReference>
<dbReference type="Gene3D" id="4.10.410.60">
    <property type="match status" value="1"/>
</dbReference>
<dbReference type="HAMAP" id="MF_00514">
    <property type="entry name" value="Ribosomal_bL35"/>
    <property type="match status" value="1"/>
</dbReference>
<dbReference type="InterPro" id="IPR001706">
    <property type="entry name" value="Ribosomal_bL35"/>
</dbReference>
<dbReference type="InterPro" id="IPR021137">
    <property type="entry name" value="Ribosomal_bL35-like"/>
</dbReference>
<dbReference type="InterPro" id="IPR018265">
    <property type="entry name" value="Ribosomal_bL35_CS"/>
</dbReference>
<dbReference type="InterPro" id="IPR037229">
    <property type="entry name" value="Ribosomal_bL35_sf"/>
</dbReference>
<dbReference type="NCBIfam" id="TIGR00001">
    <property type="entry name" value="rpmI_bact"/>
    <property type="match status" value="1"/>
</dbReference>
<dbReference type="PANTHER" id="PTHR33343">
    <property type="entry name" value="54S RIBOSOMAL PROTEIN BL35M"/>
    <property type="match status" value="1"/>
</dbReference>
<dbReference type="PANTHER" id="PTHR33343:SF1">
    <property type="entry name" value="LARGE RIBOSOMAL SUBUNIT PROTEIN BL35M"/>
    <property type="match status" value="1"/>
</dbReference>
<dbReference type="Pfam" id="PF01632">
    <property type="entry name" value="Ribosomal_L35p"/>
    <property type="match status" value="1"/>
</dbReference>
<dbReference type="PRINTS" id="PR00064">
    <property type="entry name" value="RIBOSOMALL35"/>
</dbReference>
<dbReference type="SUPFAM" id="SSF143034">
    <property type="entry name" value="L35p-like"/>
    <property type="match status" value="1"/>
</dbReference>
<dbReference type="PROSITE" id="PS00936">
    <property type="entry name" value="RIBOSOMAL_L35"/>
    <property type="match status" value="1"/>
</dbReference>
<proteinExistence type="inferred from homology"/>
<gene>
    <name evidence="1" type="primary">rpmI</name>
    <name type="ordered locus">SeHA_C1463</name>
</gene>
<protein>
    <recommendedName>
        <fullName evidence="1">Large ribosomal subunit protein bL35</fullName>
    </recommendedName>
    <alternativeName>
        <fullName evidence="3">50S ribosomal protein L35</fullName>
    </alternativeName>
</protein>
<feature type="chain" id="PRO_1000127405" description="Large ribosomal subunit protein bL35">
    <location>
        <begin position="1"/>
        <end position="65"/>
    </location>
</feature>
<feature type="region of interest" description="Disordered" evidence="2">
    <location>
        <begin position="1"/>
        <end position="22"/>
    </location>
</feature>
<feature type="compositionally biased region" description="Basic residues" evidence="2">
    <location>
        <begin position="10"/>
        <end position="22"/>
    </location>
</feature>